<keyword id="KW-0963">Cytoplasm</keyword>
<keyword id="KW-0448">Lipopolysaccharide biosynthesis</keyword>
<keyword id="KW-1185">Reference proteome</keyword>
<keyword id="KW-0808">Transferase</keyword>
<name>KDSA_STRMK</name>
<dbReference type="EC" id="2.5.1.55" evidence="1"/>
<dbReference type="EMBL" id="AM743169">
    <property type="protein sequence ID" value="CAQ45236.1"/>
    <property type="molecule type" value="Genomic_DNA"/>
</dbReference>
<dbReference type="RefSeq" id="WP_005408999.1">
    <property type="nucleotide sequence ID" value="NC_010943.1"/>
</dbReference>
<dbReference type="SMR" id="B2FK85"/>
<dbReference type="EnsemblBacteria" id="CAQ45236">
    <property type="protein sequence ID" value="CAQ45236"/>
    <property type="gene ID" value="Smlt1712"/>
</dbReference>
<dbReference type="GeneID" id="93832880"/>
<dbReference type="KEGG" id="sml:Smlt1712"/>
<dbReference type="eggNOG" id="COG2877">
    <property type="taxonomic scope" value="Bacteria"/>
</dbReference>
<dbReference type="HOGENOM" id="CLU_036666_0_0_6"/>
<dbReference type="UniPathway" id="UPA00357">
    <property type="reaction ID" value="UER00474"/>
</dbReference>
<dbReference type="Proteomes" id="UP000008840">
    <property type="component" value="Chromosome"/>
</dbReference>
<dbReference type="GO" id="GO:0005737">
    <property type="term" value="C:cytoplasm"/>
    <property type="evidence" value="ECO:0007669"/>
    <property type="project" value="UniProtKB-SubCell"/>
</dbReference>
<dbReference type="GO" id="GO:0008676">
    <property type="term" value="F:3-deoxy-8-phosphooctulonate synthase activity"/>
    <property type="evidence" value="ECO:0007669"/>
    <property type="project" value="UniProtKB-UniRule"/>
</dbReference>
<dbReference type="GO" id="GO:0019294">
    <property type="term" value="P:keto-3-deoxy-D-manno-octulosonic acid biosynthetic process"/>
    <property type="evidence" value="ECO:0007669"/>
    <property type="project" value="UniProtKB-UniRule"/>
</dbReference>
<dbReference type="Gene3D" id="3.20.20.70">
    <property type="entry name" value="Aldolase class I"/>
    <property type="match status" value="1"/>
</dbReference>
<dbReference type="HAMAP" id="MF_00056">
    <property type="entry name" value="KDO8P_synth"/>
    <property type="match status" value="1"/>
</dbReference>
<dbReference type="InterPro" id="IPR013785">
    <property type="entry name" value="Aldolase_TIM"/>
</dbReference>
<dbReference type="InterPro" id="IPR006218">
    <property type="entry name" value="DAHP1/KDSA"/>
</dbReference>
<dbReference type="InterPro" id="IPR006269">
    <property type="entry name" value="KDO8P_synthase"/>
</dbReference>
<dbReference type="NCBIfam" id="TIGR01362">
    <property type="entry name" value="KDO8P_synth"/>
    <property type="match status" value="1"/>
</dbReference>
<dbReference type="NCBIfam" id="NF003543">
    <property type="entry name" value="PRK05198.1"/>
    <property type="match status" value="1"/>
</dbReference>
<dbReference type="PANTHER" id="PTHR21057">
    <property type="entry name" value="PHOSPHO-2-DEHYDRO-3-DEOXYHEPTONATE ALDOLASE"/>
    <property type="match status" value="1"/>
</dbReference>
<dbReference type="Pfam" id="PF00793">
    <property type="entry name" value="DAHP_synth_1"/>
    <property type="match status" value="1"/>
</dbReference>
<dbReference type="SUPFAM" id="SSF51569">
    <property type="entry name" value="Aldolase"/>
    <property type="match status" value="1"/>
</dbReference>
<gene>
    <name evidence="1" type="primary">kdsA</name>
    <name type="ordered locus">Smlt1712</name>
</gene>
<protein>
    <recommendedName>
        <fullName evidence="1">2-dehydro-3-deoxyphosphooctonate aldolase</fullName>
        <ecNumber evidence="1">2.5.1.55</ecNumber>
    </recommendedName>
    <alternativeName>
        <fullName evidence="1">3-deoxy-D-manno-octulosonic acid 8-phosphate synthase</fullName>
    </alternativeName>
    <alternativeName>
        <fullName evidence="1">KDO-8-phosphate synthase</fullName>
        <shortName evidence="1">KDO 8-P synthase</shortName>
        <shortName evidence="1">KDOPS</shortName>
    </alternativeName>
    <alternativeName>
        <fullName evidence="1">Phospho-2-dehydro-3-deoxyoctonate aldolase</fullName>
    </alternativeName>
</protein>
<reference key="1">
    <citation type="journal article" date="2008" name="Genome Biol.">
        <title>The complete genome, comparative and functional analysis of Stenotrophomonas maltophilia reveals an organism heavily shielded by drug resistance determinants.</title>
        <authorList>
            <person name="Crossman L.C."/>
            <person name="Gould V.C."/>
            <person name="Dow J.M."/>
            <person name="Vernikos G.S."/>
            <person name="Okazaki A."/>
            <person name="Sebaihia M."/>
            <person name="Saunders D."/>
            <person name="Arrowsmith C."/>
            <person name="Carver T."/>
            <person name="Peters N."/>
            <person name="Adlem E."/>
            <person name="Kerhornou A."/>
            <person name="Lord A."/>
            <person name="Murphy L."/>
            <person name="Seeger K."/>
            <person name="Squares R."/>
            <person name="Rutter S."/>
            <person name="Quail M.A."/>
            <person name="Rajandream M.A."/>
            <person name="Harris D."/>
            <person name="Churcher C."/>
            <person name="Bentley S.D."/>
            <person name="Parkhill J."/>
            <person name="Thomson N.R."/>
            <person name="Avison M.B."/>
        </authorList>
    </citation>
    <scope>NUCLEOTIDE SEQUENCE [LARGE SCALE GENOMIC DNA]</scope>
    <source>
        <strain>K279a</strain>
    </source>
</reference>
<accession>B2FK85</accession>
<sequence>MKLCGFEVGLDQPLFLIAGPCVIESMQLQLDTAGKLKEVTDKLGVNFIFKSSFDKANRTSGTAFRGPGMEEGLKVLAEVRKQIGVPVLTDVHEYTPMDEVASVVDVLQTPAFLVRQTDFIRKVCSAGKPVNIKKGQFLAPWDMKPVVEKAKATGNEQIMVCERGASFGYNNLVSDMRSLAVMRDTGCPVVFDATHSVQLPGGQGTSSGGQREHVPVLARAAVAVGISGLFAETHPDPSKALSDGPNAWPLDQMEALLETLMELDAVTKKHGFSRFA</sequence>
<evidence type="ECO:0000255" key="1">
    <source>
        <dbReference type="HAMAP-Rule" id="MF_00056"/>
    </source>
</evidence>
<proteinExistence type="inferred from homology"/>
<comment type="catalytic activity">
    <reaction evidence="1">
        <text>D-arabinose 5-phosphate + phosphoenolpyruvate + H2O = 3-deoxy-alpha-D-manno-2-octulosonate-8-phosphate + phosphate</text>
        <dbReference type="Rhea" id="RHEA:14053"/>
        <dbReference type="ChEBI" id="CHEBI:15377"/>
        <dbReference type="ChEBI" id="CHEBI:43474"/>
        <dbReference type="ChEBI" id="CHEBI:57693"/>
        <dbReference type="ChEBI" id="CHEBI:58702"/>
        <dbReference type="ChEBI" id="CHEBI:85985"/>
        <dbReference type="EC" id="2.5.1.55"/>
    </reaction>
</comment>
<comment type="pathway">
    <text evidence="1">Carbohydrate biosynthesis; 3-deoxy-D-manno-octulosonate biosynthesis; 3-deoxy-D-manno-octulosonate from D-ribulose 5-phosphate: step 2/3.</text>
</comment>
<comment type="subcellular location">
    <subcellularLocation>
        <location evidence="1">Cytoplasm</location>
    </subcellularLocation>
</comment>
<comment type="similarity">
    <text evidence="1">Belongs to the KdsA family.</text>
</comment>
<organism>
    <name type="scientific">Stenotrophomonas maltophilia (strain K279a)</name>
    <dbReference type="NCBI Taxonomy" id="522373"/>
    <lineage>
        <taxon>Bacteria</taxon>
        <taxon>Pseudomonadati</taxon>
        <taxon>Pseudomonadota</taxon>
        <taxon>Gammaproteobacteria</taxon>
        <taxon>Lysobacterales</taxon>
        <taxon>Lysobacteraceae</taxon>
        <taxon>Stenotrophomonas</taxon>
        <taxon>Stenotrophomonas maltophilia group</taxon>
    </lineage>
</organism>
<feature type="chain" id="PRO_1000091840" description="2-dehydro-3-deoxyphosphooctonate aldolase">
    <location>
        <begin position="1"/>
        <end position="276"/>
    </location>
</feature>